<dbReference type="EMBL" id="CP000699">
    <property type="protein sequence ID" value="ABQ67629.1"/>
    <property type="molecule type" value="Genomic_DNA"/>
</dbReference>
<dbReference type="SMR" id="A5V5R3"/>
<dbReference type="STRING" id="392499.Swit_1264"/>
<dbReference type="PaxDb" id="392499-Swit_1264"/>
<dbReference type="KEGG" id="swi:Swit_1264"/>
<dbReference type="eggNOG" id="COG1706">
    <property type="taxonomic scope" value="Bacteria"/>
</dbReference>
<dbReference type="HOGENOM" id="CLU_045235_1_0_5"/>
<dbReference type="OrthoDB" id="9786431at2"/>
<dbReference type="Proteomes" id="UP000001989">
    <property type="component" value="Chromosome"/>
</dbReference>
<dbReference type="GO" id="GO:0009428">
    <property type="term" value="C:bacterial-type flagellum basal body, distal rod, P ring"/>
    <property type="evidence" value="ECO:0007669"/>
    <property type="project" value="InterPro"/>
</dbReference>
<dbReference type="GO" id="GO:0030288">
    <property type="term" value="C:outer membrane-bounded periplasmic space"/>
    <property type="evidence" value="ECO:0007669"/>
    <property type="project" value="InterPro"/>
</dbReference>
<dbReference type="GO" id="GO:0005198">
    <property type="term" value="F:structural molecule activity"/>
    <property type="evidence" value="ECO:0007669"/>
    <property type="project" value="InterPro"/>
</dbReference>
<dbReference type="GO" id="GO:0071973">
    <property type="term" value="P:bacterial-type flagellum-dependent cell motility"/>
    <property type="evidence" value="ECO:0007669"/>
    <property type="project" value="InterPro"/>
</dbReference>
<dbReference type="HAMAP" id="MF_00416">
    <property type="entry name" value="FlgI"/>
    <property type="match status" value="1"/>
</dbReference>
<dbReference type="InterPro" id="IPR001782">
    <property type="entry name" value="Flag_FlgI"/>
</dbReference>
<dbReference type="NCBIfam" id="NF003676">
    <property type="entry name" value="PRK05303.1"/>
    <property type="match status" value="1"/>
</dbReference>
<dbReference type="PANTHER" id="PTHR30381">
    <property type="entry name" value="FLAGELLAR P-RING PERIPLASMIC PROTEIN FLGI"/>
    <property type="match status" value="1"/>
</dbReference>
<dbReference type="PANTHER" id="PTHR30381:SF0">
    <property type="entry name" value="FLAGELLAR P-RING PROTEIN"/>
    <property type="match status" value="1"/>
</dbReference>
<dbReference type="Pfam" id="PF02119">
    <property type="entry name" value="FlgI"/>
    <property type="match status" value="1"/>
</dbReference>
<dbReference type="PRINTS" id="PR01010">
    <property type="entry name" value="FLGPRINGFLGI"/>
</dbReference>
<comment type="function">
    <text evidence="1">Assembles around the rod to form the L-ring and probably protects the motor/basal body from shearing forces during rotation.</text>
</comment>
<comment type="subunit">
    <text evidence="1">The basal body constitutes a major portion of the flagellar organelle and consists of four rings (L,P,S, and M) mounted on a central rod.</text>
</comment>
<comment type="subcellular location">
    <subcellularLocation>
        <location evidence="1">Periplasm</location>
    </subcellularLocation>
    <subcellularLocation>
        <location evidence="1">Bacterial flagellum basal body</location>
    </subcellularLocation>
</comment>
<comment type="similarity">
    <text evidence="1">Belongs to the FlgI family.</text>
</comment>
<reference key="1">
    <citation type="journal article" date="2010" name="J. Bacteriol.">
        <title>Genome sequence of the dioxin-mineralizing bacterium Sphingomonas wittichii RW1.</title>
        <authorList>
            <person name="Miller T.R."/>
            <person name="Delcher A.L."/>
            <person name="Salzberg S.L."/>
            <person name="Saunders E."/>
            <person name="Detter J.C."/>
            <person name="Halden R.U."/>
        </authorList>
    </citation>
    <scope>NUCLEOTIDE SEQUENCE [LARGE SCALE GENOMIC DNA]</scope>
    <source>
        <strain>DSM 6014 / CCUG 31198 / JCM 15750 / NBRC 105917 / EY 4224 / RW1</strain>
    </source>
</reference>
<sequence length="367" mass="37601">MFRALITALFCFSGLALAGAGHAERIKDIGSFAGLRANQLTGYGIVVGLAGTGDDSLDYSTLGMKGVASRFGLQLPAGVNPALKNAAAVMITAELPAFAKPGQRLDITISALGKAKSLRGGTLIMAPLMGADGQIYAMAQGNLAVGGLGIDAADGSKLTINVPTAGRIPGGATVERSVDAGFATTPQLRFDLSEGDLTTSQRVAAAINGRLGQPIARSIDATTITIDAPQGAEVRTALMSRIENLEVDTAEAPARVVVNARTGTVVINGAVRIAPVAVTHGKMTVQVDEKPQIIQPQPFSRGQTAVQQSSAINVEQEARPMFEFNPGASLADIVKAVNAIGASPADLVAILEALKQAGAMKAELVVL</sequence>
<feature type="signal peptide" evidence="1">
    <location>
        <begin position="1"/>
        <end position="18"/>
    </location>
</feature>
<feature type="chain" id="PRO_5000250618" description="Flagellar P-ring protein">
    <location>
        <begin position="19"/>
        <end position="367"/>
    </location>
</feature>
<accession>A5V5R3</accession>
<gene>
    <name evidence="1" type="primary">flgI</name>
    <name type="ordered locus">Swit_1264</name>
</gene>
<keyword id="KW-0975">Bacterial flagellum</keyword>
<keyword id="KW-0574">Periplasm</keyword>
<keyword id="KW-1185">Reference proteome</keyword>
<keyword id="KW-0732">Signal</keyword>
<proteinExistence type="inferred from homology"/>
<protein>
    <recommendedName>
        <fullName evidence="1">Flagellar P-ring protein</fullName>
    </recommendedName>
    <alternativeName>
        <fullName evidence="1">Basal body P-ring protein</fullName>
    </alternativeName>
</protein>
<evidence type="ECO:0000255" key="1">
    <source>
        <dbReference type="HAMAP-Rule" id="MF_00416"/>
    </source>
</evidence>
<organism>
    <name type="scientific">Rhizorhabdus wittichii (strain DSM 6014 / CCUG 31198 / JCM 15750 / NBRC 105917 / EY 4224 / RW1)</name>
    <name type="common">Sphingomonas wittichii</name>
    <dbReference type="NCBI Taxonomy" id="392499"/>
    <lineage>
        <taxon>Bacteria</taxon>
        <taxon>Pseudomonadati</taxon>
        <taxon>Pseudomonadota</taxon>
        <taxon>Alphaproteobacteria</taxon>
        <taxon>Sphingomonadales</taxon>
        <taxon>Sphingomonadaceae</taxon>
        <taxon>Rhizorhabdus</taxon>
    </lineage>
</organism>
<name>FLGI_RHIWR</name>